<reference key="1">
    <citation type="journal article" date="2008" name="Genome Res.">
        <title>Insights from the complete genome sequence of Mycobacterium marinum on the evolution of Mycobacterium tuberculosis.</title>
        <authorList>
            <person name="Stinear T.P."/>
            <person name="Seemann T."/>
            <person name="Harrison P.F."/>
            <person name="Jenkin G.A."/>
            <person name="Davies J.K."/>
            <person name="Johnson P.D."/>
            <person name="Abdellah Z."/>
            <person name="Arrowsmith C."/>
            <person name="Chillingworth T."/>
            <person name="Churcher C."/>
            <person name="Clarke K."/>
            <person name="Cronin A."/>
            <person name="Davis P."/>
            <person name="Goodhead I."/>
            <person name="Holroyd N."/>
            <person name="Jagels K."/>
            <person name="Lord A."/>
            <person name="Moule S."/>
            <person name="Mungall K."/>
            <person name="Norbertczak H."/>
            <person name="Quail M.A."/>
            <person name="Rabbinowitsch E."/>
            <person name="Walker D."/>
            <person name="White B."/>
            <person name="Whitehead S."/>
            <person name="Small P.L."/>
            <person name="Brosch R."/>
            <person name="Ramakrishnan L."/>
            <person name="Fischbach M.A."/>
            <person name="Parkhill J."/>
            <person name="Cole S.T."/>
        </authorList>
    </citation>
    <scope>NUCLEOTIDE SEQUENCE [LARGE SCALE GENOMIC DNA]</scope>
    <source>
        <strain>ATCC BAA-535 / M</strain>
    </source>
</reference>
<protein>
    <recommendedName>
        <fullName evidence="1">Leucine--tRNA ligase</fullName>
        <ecNumber evidence="1">6.1.1.4</ecNumber>
    </recommendedName>
    <alternativeName>
        <fullName evidence="1">Leucyl-tRNA synthetase</fullName>
        <shortName evidence="1">LeuRS</shortName>
    </alternativeName>
</protein>
<name>SYL_MYCMM</name>
<accession>B2HIA2</accession>
<evidence type="ECO:0000255" key="1">
    <source>
        <dbReference type="HAMAP-Rule" id="MF_00049"/>
    </source>
</evidence>
<evidence type="ECO:0000256" key="2">
    <source>
        <dbReference type="SAM" id="MobiDB-lite"/>
    </source>
</evidence>
<sequence>MTESPTTTPGSTSGAPSGVPSGVNDAESDAPRHRYTAELAAGVERTWQQNWARLGTFNVPNPVGSLAPSDGSPVPEDKLFVQDMFPYPSGEGLHVGHPLGYIATDVFARYHRMKGRNVLHALGFDAFGLPAEQYAVQTGTHPRTRTEANVVNFRRQLGRLGLGHDSRRSFSTTDVEFYKWTQWIFLQIYNAWFDAAANKARPISELVAEFDSGARSLVDGRDWSTLSAGERADVIDDHRLVYRADSMVNWCPGLGTVLANEEVTSDGRSDRGNFPVFRKRLRQWMMRITAYSDRLLDDLDVLDWPDQVKTMQRNWIGRSTGASALFTATRSNGETVGLEVFTTRPDTLFGATYLVLAPEHDLVDDLVGAGWPAGVDPLWTGGGATPAEAVAAYRRAIAAKSDLERQESKEKTGVFLGSHAINPATGQPVPIFIADYVLAGYGTGAIMAVPGHDQRDWDFARALGLPVVEVIAGGDISQAAYTGDGVLVNSGFLDGMSVGEAKQAITARLESDGHGQARIEFKLRDWLFARQRYWGEPFPIVYDADGRPHALDESALPVELPDVPDYSPVLFDPDDANSEPSPPLGKATEWVHVELDLGDGLKPYSRDTNVMPQWAGSSWYELRYTDPHNADRFCAKENETYWMGPRPAEHGPDDPGGVDLYVGGAEHAVLHLLYARFWHKVLYDLGHVSSREPYRKLINQGYIQAFAYTDARGSYVPAEEVIERDGGFVYPGADGEIEVFQEFGKIGKSLKNSISPDEICDDYGADTLRVYEMSMGPIEASRPWATKDVIGAYRFLQRVWRLVIDENTGEILVADTPAELDTDTLRALHRAIAGVAEDYAALRNNTAVAKLIEYTNFLTKRHRDAVPRAAIEPLVLMVAPLAPHLAEELWQRLGHTTSLAHGPFPAADPAYLIDDTVEYPVQVNGKVRGRVVVAADADDDAVKAAALADEKVQAFLAGASPRKVIVVAGRLVNLVV</sequence>
<organism>
    <name type="scientific">Mycobacterium marinum (strain ATCC BAA-535 / M)</name>
    <dbReference type="NCBI Taxonomy" id="216594"/>
    <lineage>
        <taxon>Bacteria</taxon>
        <taxon>Bacillati</taxon>
        <taxon>Actinomycetota</taxon>
        <taxon>Actinomycetes</taxon>
        <taxon>Mycobacteriales</taxon>
        <taxon>Mycobacteriaceae</taxon>
        <taxon>Mycobacterium</taxon>
        <taxon>Mycobacterium ulcerans group</taxon>
    </lineage>
</organism>
<gene>
    <name evidence="1" type="primary">leuS</name>
    <name type="ordered locus">MMAR_0057</name>
</gene>
<comment type="catalytic activity">
    <reaction evidence="1">
        <text>tRNA(Leu) + L-leucine + ATP = L-leucyl-tRNA(Leu) + AMP + diphosphate</text>
        <dbReference type="Rhea" id="RHEA:11688"/>
        <dbReference type="Rhea" id="RHEA-COMP:9613"/>
        <dbReference type="Rhea" id="RHEA-COMP:9622"/>
        <dbReference type="ChEBI" id="CHEBI:30616"/>
        <dbReference type="ChEBI" id="CHEBI:33019"/>
        <dbReference type="ChEBI" id="CHEBI:57427"/>
        <dbReference type="ChEBI" id="CHEBI:78442"/>
        <dbReference type="ChEBI" id="CHEBI:78494"/>
        <dbReference type="ChEBI" id="CHEBI:456215"/>
        <dbReference type="EC" id="6.1.1.4"/>
    </reaction>
</comment>
<comment type="subcellular location">
    <subcellularLocation>
        <location evidence="1">Cytoplasm</location>
    </subcellularLocation>
</comment>
<comment type="similarity">
    <text evidence="1">Belongs to the class-I aminoacyl-tRNA synthetase family.</text>
</comment>
<keyword id="KW-0030">Aminoacyl-tRNA synthetase</keyword>
<keyword id="KW-0067">ATP-binding</keyword>
<keyword id="KW-0963">Cytoplasm</keyword>
<keyword id="KW-0436">Ligase</keyword>
<keyword id="KW-0547">Nucleotide-binding</keyword>
<keyword id="KW-0648">Protein biosynthesis</keyword>
<keyword id="KW-1185">Reference proteome</keyword>
<feature type="chain" id="PRO_1000091336" description="Leucine--tRNA ligase">
    <location>
        <begin position="1"/>
        <end position="976"/>
    </location>
</feature>
<feature type="region of interest" description="Disordered" evidence="2">
    <location>
        <begin position="1"/>
        <end position="34"/>
    </location>
</feature>
<feature type="short sequence motif" description="'HIGH' region">
    <location>
        <begin position="86"/>
        <end position="97"/>
    </location>
</feature>
<feature type="short sequence motif" description="'KMSKS' region">
    <location>
        <begin position="745"/>
        <end position="749"/>
    </location>
</feature>
<feature type="compositionally biased region" description="Low complexity" evidence="2">
    <location>
        <begin position="1"/>
        <end position="23"/>
    </location>
</feature>
<feature type="binding site" evidence="1">
    <location>
        <position position="748"/>
    </location>
    <ligand>
        <name>ATP</name>
        <dbReference type="ChEBI" id="CHEBI:30616"/>
    </ligand>
</feature>
<proteinExistence type="inferred from homology"/>
<dbReference type="EC" id="6.1.1.4" evidence="1"/>
<dbReference type="EMBL" id="CP000854">
    <property type="protein sequence ID" value="ACC38528.1"/>
    <property type="molecule type" value="Genomic_DNA"/>
</dbReference>
<dbReference type="RefSeq" id="WP_012392063.1">
    <property type="nucleotide sequence ID" value="NC_010612.1"/>
</dbReference>
<dbReference type="SMR" id="B2HIA2"/>
<dbReference type="STRING" id="216594.MMAR_0057"/>
<dbReference type="KEGG" id="mmi:MMAR_0057"/>
<dbReference type="eggNOG" id="COG0495">
    <property type="taxonomic scope" value="Bacteria"/>
</dbReference>
<dbReference type="HOGENOM" id="CLU_004427_0_0_11"/>
<dbReference type="OrthoDB" id="9810365at2"/>
<dbReference type="Proteomes" id="UP000001190">
    <property type="component" value="Chromosome"/>
</dbReference>
<dbReference type="GO" id="GO:0005829">
    <property type="term" value="C:cytosol"/>
    <property type="evidence" value="ECO:0007669"/>
    <property type="project" value="TreeGrafter"/>
</dbReference>
<dbReference type="GO" id="GO:0002161">
    <property type="term" value="F:aminoacyl-tRNA deacylase activity"/>
    <property type="evidence" value="ECO:0007669"/>
    <property type="project" value="InterPro"/>
</dbReference>
<dbReference type="GO" id="GO:0005524">
    <property type="term" value="F:ATP binding"/>
    <property type="evidence" value="ECO:0007669"/>
    <property type="project" value="UniProtKB-UniRule"/>
</dbReference>
<dbReference type="GO" id="GO:0004823">
    <property type="term" value="F:leucine-tRNA ligase activity"/>
    <property type="evidence" value="ECO:0007669"/>
    <property type="project" value="UniProtKB-UniRule"/>
</dbReference>
<dbReference type="GO" id="GO:0006429">
    <property type="term" value="P:leucyl-tRNA aminoacylation"/>
    <property type="evidence" value="ECO:0007669"/>
    <property type="project" value="UniProtKB-UniRule"/>
</dbReference>
<dbReference type="CDD" id="cd07958">
    <property type="entry name" value="Anticodon_Ia_Leu_BEm"/>
    <property type="match status" value="1"/>
</dbReference>
<dbReference type="FunFam" id="3.40.50.620:FF:000060">
    <property type="entry name" value="Leucine--tRNA ligase"/>
    <property type="match status" value="1"/>
</dbReference>
<dbReference type="FunFam" id="3.40.50.620:FF:000087">
    <property type="entry name" value="Leucine--tRNA ligase"/>
    <property type="match status" value="1"/>
</dbReference>
<dbReference type="FunFam" id="3.90.740.10:FF:000017">
    <property type="entry name" value="Leucine--tRNA ligase"/>
    <property type="match status" value="1"/>
</dbReference>
<dbReference type="FunFam" id="1.10.730.10:FF:000011">
    <property type="entry name" value="Leucine--tRNA ligase chloroplastic/mitochondrial"/>
    <property type="match status" value="1"/>
</dbReference>
<dbReference type="Gene3D" id="3.40.50.620">
    <property type="entry name" value="HUPs"/>
    <property type="match status" value="2"/>
</dbReference>
<dbReference type="Gene3D" id="1.10.730.10">
    <property type="entry name" value="Isoleucyl-tRNA Synthetase, Domain 1"/>
    <property type="match status" value="2"/>
</dbReference>
<dbReference type="Gene3D" id="3.90.740.10">
    <property type="entry name" value="Valyl/Leucyl/Isoleucyl-tRNA synthetase, editing domain"/>
    <property type="match status" value="1"/>
</dbReference>
<dbReference type="HAMAP" id="MF_00049_B">
    <property type="entry name" value="Leu_tRNA_synth_B"/>
    <property type="match status" value="1"/>
</dbReference>
<dbReference type="InterPro" id="IPR001412">
    <property type="entry name" value="aa-tRNA-synth_I_CS"/>
</dbReference>
<dbReference type="InterPro" id="IPR002302">
    <property type="entry name" value="Leu-tRNA-ligase"/>
</dbReference>
<dbReference type="InterPro" id="IPR025709">
    <property type="entry name" value="Leu_tRNA-synth_edit"/>
</dbReference>
<dbReference type="InterPro" id="IPR013155">
    <property type="entry name" value="M/V/L/I-tRNA-synth_anticd-bd"/>
</dbReference>
<dbReference type="InterPro" id="IPR015413">
    <property type="entry name" value="Methionyl/Leucyl_tRNA_Synth"/>
</dbReference>
<dbReference type="InterPro" id="IPR014729">
    <property type="entry name" value="Rossmann-like_a/b/a_fold"/>
</dbReference>
<dbReference type="InterPro" id="IPR009080">
    <property type="entry name" value="tRNAsynth_Ia_anticodon-bd"/>
</dbReference>
<dbReference type="InterPro" id="IPR009008">
    <property type="entry name" value="Val/Leu/Ile-tRNA-synth_edit"/>
</dbReference>
<dbReference type="NCBIfam" id="TIGR00396">
    <property type="entry name" value="leuS_bact"/>
    <property type="match status" value="1"/>
</dbReference>
<dbReference type="PANTHER" id="PTHR43740:SF2">
    <property type="entry name" value="LEUCINE--TRNA LIGASE, MITOCHONDRIAL"/>
    <property type="match status" value="1"/>
</dbReference>
<dbReference type="PANTHER" id="PTHR43740">
    <property type="entry name" value="LEUCYL-TRNA SYNTHETASE"/>
    <property type="match status" value="1"/>
</dbReference>
<dbReference type="Pfam" id="PF08264">
    <property type="entry name" value="Anticodon_1"/>
    <property type="match status" value="1"/>
</dbReference>
<dbReference type="Pfam" id="PF13603">
    <property type="entry name" value="tRNA-synt_1_2"/>
    <property type="match status" value="1"/>
</dbReference>
<dbReference type="Pfam" id="PF09334">
    <property type="entry name" value="tRNA-synt_1g"/>
    <property type="match status" value="1"/>
</dbReference>
<dbReference type="PRINTS" id="PR00985">
    <property type="entry name" value="TRNASYNTHLEU"/>
</dbReference>
<dbReference type="SUPFAM" id="SSF47323">
    <property type="entry name" value="Anticodon-binding domain of a subclass of class I aminoacyl-tRNA synthetases"/>
    <property type="match status" value="1"/>
</dbReference>
<dbReference type="SUPFAM" id="SSF52374">
    <property type="entry name" value="Nucleotidylyl transferase"/>
    <property type="match status" value="1"/>
</dbReference>
<dbReference type="SUPFAM" id="SSF50677">
    <property type="entry name" value="ValRS/IleRS/LeuRS editing domain"/>
    <property type="match status" value="1"/>
</dbReference>
<dbReference type="PROSITE" id="PS00178">
    <property type="entry name" value="AA_TRNA_LIGASE_I"/>
    <property type="match status" value="1"/>
</dbReference>